<sequence length="279" mass="31226">MTNIITVNNLFFKYDSNQTHYQLENVSFHVKQGEWLSIIGHNGSGKSTTVRLIDGLLEAESGQIIIDGQELTEDNVWELRHKIGMVFQNPDNQFVGATVEDDVAFGLENKGIPLKDMKERVDQALDLVGMSEFKMREPARLSGGQKQRVAIAGAVAMRPQVIILDEATSMLDPEGRLELIRTIRAIRQKYNLTVISITHDLDEVALSDRVIVMKNGKVESTSTPKALFGRGNRLISLGLDVPFTSRLMAELAANGLDIGTEYLTEKELEEQLWELNLKM</sequence>
<reference key="1">
    <citation type="journal article" date="2002" name="Proc. Natl. Acad. Sci. U.S.A.">
        <title>Complete genome sequence and comparative genomic analysis of an emerging human pathogen, serotype V Streptococcus agalactiae.</title>
        <authorList>
            <person name="Tettelin H."/>
            <person name="Masignani V."/>
            <person name="Cieslewicz M.J."/>
            <person name="Eisen J.A."/>
            <person name="Peterson S.N."/>
            <person name="Wessels M.R."/>
            <person name="Paulsen I.T."/>
            <person name="Nelson K.E."/>
            <person name="Margarit I."/>
            <person name="Read T.D."/>
            <person name="Madoff L.C."/>
            <person name="Wolf A.M."/>
            <person name="Beanan M.J."/>
            <person name="Brinkac L.M."/>
            <person name="Daugherty S.C."/>
            <person name="DeBoy R.T."/>
            <person name="Durkin A.S."/>
            <person name="Kolonay J.F."/>
            <person name="Madupu R."/>
            <person name="Lewis M.R."/>
            <person name="Radune D."/>
            <person name="Fedorova N.B."/>
            <person name="Scanlan D."/>
            <person name="Khouri H.M."/>
            <person name="Mulligan S."/>
            <person name="Carty H.A."/>
            <person name="Cline R.T."/>
            <person name="Van Aken S.E."/>
            <person name="Gill J."/>
            <person name="Scarselli M."/>
            <person name="Mora M."/>
            <person name="Iacobini E.T."/>
            <person name="Brettoni C."/>
            <person name="Galli G."/>
            <person name="Mariani M."/>
            <person name="Vegni F."/>
            <person name="Maione D."/>
            <person name="Rinaudo D."/>
            <person name="Rappuoli R."/>
            <person name="Telford J.L."/>
            <person name="Kasper D.L."/>
            <person name="Grandi G."/>
            <person name="Fraser C.M."/>
        </authorList>
    </citation>
    <scope>NUCLEOTIDE SEQUENCE [LARGE SCALE GENOMIC DNA]</scope>
    <source>
        <strain>ATCC BAA-611 / 2603 V/R</strain>
    </source>
</reference>
<keyword id="KW-0067">ATP-binding</keyword>
<keyword id="KW-1003">Cell membrane</keyword>
<keyword id="KW-0472">Membrane</keyword>
<keyword id="KW-0547">Nucleotide-binding</keyword>
<keyword id="KW-1185">Reference proteome</keyword>
<keyword id="KW-1278">Translocase</keyword>
<keyword id="KW-0813">Transport</keyword>
<name>ECFA1_STRA5</name>
<organism>
    <name type="scientific">Streptococcus agalactiae serotype V (strain ATCC BAA-611 / 2603 V/R)</name>
    <dbReference type="NCBI Taxonomy" id="208435"/>
    <lineage>
        <taxon>Bacteria</taxon>
        <taxon>Bacillati</taxon>
        <taxon>Bacillota</taxon>
        <taxon>Bacilli</taxon>
        <taxon>Lactobacillales</taxon>
        <taxon>Streptococcaceae</taxon>
        <taxon>Streptococcus</taxon>
    </lineage>
</organism>
<proteinExistence type="inferred from homology"/>
<gene>
    <name evidence="1" type="primary">ecfA1</name>
    <name type="synonym">cbiO1</name>
    <name type="ordered locus">SAG2151</name>
</gene>
<accession>Q8DWR3</accession>
<comment type="function">
    <text evidence="1">ATP-binding (A) component of a common energy-coupling factor (ECF) ABC-transporter complex. Unlike classic ABC transporters this ECF transporter provides the energy necessary to transport a number of different substrates.</text>
</comment>
<comment type="subunit">
    <text evidence="1">Forms a stable energy-coupling factor (ECF) transporter complex composed of 2 membrane-embedded substrate-binding proteins (S component), 2 ATP-binding proteins (A component) and 2 transmembrane proteins (T component).</text>
</comment>
<comment type="subcellular location">
    <subcellularLocation>
        <location evidence="1">Cell membrane</location>
        <topology evidence="1">Peripheral membrane protein</topology>
    </subcellularLocation>
</comment>
<comment type="similarity">
    <text evidence="1">Belongs to the ABC transporter superfamily. Energy-coupling factor EcfA family.</text>
</comment>
<evidence type="ECO:0000255" key="1">
    <source>
        <dbReference type="HAMAP-Rule" id="MF_01710"/>
    </source>
</evidence>
<protein>
    <recommendedName>
        <fullName evidence="1">Energy-coupling factor transporter ATP-binding protein EcfA1</fullName>
        <shortName evidence="1">ECF transporter A component EcfA1</shortName>
        <ecNumber evidence="1">7.-.-.-</ecNumber>
    </recommendedName>
</protein>
<feature type="chain" id="PRO_0000092088" description="Energy-coupling factor transporter ATP-binding protein EcfA1">
    <location>
        <begin position="1"/>
        <end position="279"/>
    </location>
</feature>
<feature type="domain" description="ABC transporter" evidence="1">
    <location>
        <begin position="5"/>
        <end position="240"/>
    </location>
</feature>
<feature type="binding site" evidence="1">
    <location>
        <begin position="40"/>
        <end position="47"/>
    </location>
    <ligand>
        <name>ATP</name>
        <dbReference type="ChEBI" id="CHEBI:30616"/>
    </ligand>
</feature>
<dbReference type="EC" id="7.-.-.-" evidence="1"/>
<dbReference type="EMBL" id="AE009948">
    <property type="protein sequence ID" value="AAN01009.1"/>
    <property type="molecule type" value="Genomic_DNA"/>
</dbReference>
<dbReference type="RefSeq" id="NP_689136.1">
    <property type="nucleotide sequence ID" value="NC_004116.1"/>
</dbReference>
<dbReference type="RefSeq" id="WP_000181757.1">
    <property type="nucleotide sequence ID" value="NC_004116.1"/>
</dbReference>
<dbReference type="SMR" id="Q8DWR3"/>
<dbReference type="STRING" id="208435.SAG2151"/>
<dbReference type="KEGG" id="sag:SAG2151"/>
<dbReference type="PATRIC" id="fig|208435.3.peg.2154"/>
<dbReference type="HOGENOM" id="CLU_000604_1_22_9"/>
<dbReference type="OrthoDB" id="9784332at2"/>
<dbReference type="Proteomes" id="UP000000821">
    <property type="component" value="Chromosome"/>
</dbReference>
<dbReference type="GO" id="GO:0043190">
    <property type="term" value="C:ATP-binding cassette (ABC) transporter complex"/>
    <property type="evidence" value="ECO:0007669"/>
    <property type="project" value="TreeGrafter"/>
</dbReference>
<dbReference type="GO" id="GO:0005524">
    <property type="term" value="F:ATP binding"/>
    <property type="evidence" value="ECO:0007669"/>
    <property type="project" value="UniProtKB-KW"/>
</dbReference>
<dbReference type="GO" id="GO:0016887">
    <property type="term" value="F:ATP hydrolysis activity"/>
    <property type="evidence" value="ECO:0007669"/>
    <property type="project" value="InterPro"/>
</dbReference>
<dbReference type="GO" id="GO:0042626">
    <property type="term" value="F:ATPase-coupled transmembrane transporter activity"/>
    <property type="evidence" value="ECO:0007669"/>
    <property type="project" value="TreeGrafter"/>
</dbReference>
<dbReference type="CDD" id="cd03225">
    <property type="entry name" value="ABC_cobalt_CbiO_domain1"/>
    <property type="match status" value="1"/>
</dbReference>
<dbReference type="FunFam" id="3.40.50.300:FF:000224">
    <property type="entry name" value="Energy-coupling factor transporter ATP-binding protein EcfA"/>
    <property type="match status" value="1"/>
</dbReference>
<dbReference type="Gene3D" id="3.40.50.300">
    <property type="entry name" value="P-loop containing nucleotide triphosphate hydrolases"/>
    <property type="match status" value="1"/>
</dbReference>
<dbReference type="InterPro" id="IPR003593">
    <property type="entry name" value="AAA+_ATPase"/>
</dbReference>
<dbReference type="InterPro" id="IPR003439">
    <property type="entry name" value="ABC_transporter-like_ATP-bd"/>
</dbReference>
<dbReference type="InterPro" id="IPR017871">
    <property type="entry name" value="ABC_transporter-like_CS"/>
</dbReference>
<dbReference type="InterPro" id="IPR015856">
    <property type="entry name" value="ABC_transpr_CbiO/EcfA_su"/>
</dbReference>
<dbReference type="InterPro" id="IPR050095">
    <property type="entry name" value="ECF_ABC_transporter_ATP-bd"/>
</dbReference>
<dbReference type="InterPro" id="IPR030947">
    <property type="entry name" value="EcfA_1"/>
</dbReference>
<dbReference type="InterPro" id="IPR027417">
    <property type="entry name" value="P-loop_NTPase"/>
</dbReference>
<dbReference type="NCBIfam" id="TIGR04520">
    <property type="entry name" value="ECF_ATPase_1"/>
    <property type="match status" value="1"/>
</dbReference>
<dbReference type="NCBIfam" id="NF010156">
    <property type="entry name" value="PRK13635.1"/>
    <property type="match status" value="1"/>
</dbReference>
<dbReference type="NCBIfam" id="NF010167">
    <property type="entry name" value="PRK13648.1"/>
    <property type="match status" value="1"/>
</dbReference>
<dbReference type="PANTHER" id="PTHR43553:SF24">
    <property type="entry name" value="ENERGY-COUPLING FACTOR TRANSPORTER ATP-BINDING PROTEIN ECFA1"/>
    <property type="match status" value="1"/>
</dbReference>
<dbReference type="PANTHER" id="PTHR43553">
    <property type="entry name" value="HEAVY METAL TRANSPORTER"/>
    <property type="match status" value="1"/>
</dbReference>
<dbReference type="Pfam" id="PF00005">
    <property type="entry name" value="ABC_tran"/>
    <property type="match status" value="1"/>
</dbReference>
<dbReference type="SMART" id="SM00382">
    <property type="entry name" value="AAA"/>
    <property type="match status" value="1"/>
</dbReference>
<dbReference type="SUPFAM" id="SSF52540">
    <property type="entry name" value="P-loop containing nucleoside triphosphate hydrolases"/>
    <property type="match status" value="1"/>
</dbReference>
<dbReference type="PROSITE" id="PS00211">
    <property type="entry name" value="ABC_TRANSPORTER_1"/>
    <property type="match status" value="1"/>
</dbReference>
<dbReference type="PROSITE" id="PS50893">
    <property type="entry name" value="ABC_TRANSPORTER_2"/>
    <property type="match status" value="1"/>
</dbReference>
<dbReference type="PROSITE" id="PS51246">
    <property type="entry name" value="CBIO"/>
    <property type="match status" value="1"/>
</dbReference>